<organism>
    <name type="scientific">Rickettsia typhi (strain ATCC VR-144 / Wilmington)</name>
    <dbReference type="NCBI Taxonomy" id="257363"/>
    <lineage>
        <taxon>Bacteria</taxon>
        <taxon>Pseudomonadati</taxon>
        <taxon>Pseudomonadota</taxon>
        <taxon>Alphaproteobacteria</taxon>
        <taxon>Rickettsiales</taxon>
        <taxon>Rickettsiaceae</taxon>
        <taxon>Rickettsieae</taxon>
        <taxon>Rickettsia</taxon>
        <taxon>typhus group</taxon>
    </lineage>
</organism>
<evidence type="ECO:0000305" key="1"/>
<comment type="similarity">
    <text evidence="1">Belongs to the glycosyltransferase 2 family.</text>
</comment>
<keyword id="KW-0328">Glycosyltransferase</keyword>
<keyword id="KW-0808">Transferase</keyword>
<proteinExistence type="inferred from homology"/>
<gene>
    <name type="ordered locus">RT0329</name>
</gene>
<protein>
    <recommendedName>
        <fullName>Uncharacterized glycosyltransferase RT0329</fullName>
        <ecNumber>2.4.-.-</ecNumber>
    </recommendedName>
</protein>
<feature type="chain" id="PRO_0000268855" description="Uncharacterized glycosyltransferase RT0329">
    <location>
        <begin position="1"/>
        <end position="318"/>
    </location>
</feature>
<name>Y329_RICTY</name>
<sequence length="318" mass="37003">MKQNTYSPLVSIIIPVYNGANYMREAIDSALAQTYKNIEIIVVNDGSKDKTETIALSYGDKICYFYKENGGCGSALNYGIKNMKGEYFSWLSHDDLYYPNKIEHQINILNKLDNKDVIVYCGYELIDQKSHSLYFVKPDQRYSKEKLDISLFPLLHSLIHGCTLLIPSILFKKIGLFDESLKYTHDYDLWFKFLRVSSVYFDHEVLIKSRVHDAQTTNTALNQLEEYEALWSGFLKKLTKQEMIMIKGSTHQFLSDIAVFFKKNGYIKSYQLALAMTDKKIIGGFCTFIIKEIIYSLRKYGINTTITKIYTWIRKNRK</sequence>
<accession>Q68X33</accession>
<reference key="1">
    <citation type="journal article" date="2004" name="J. Bacteriol.">
        <title>Complete genome sequence of Rickettsia typhi and comparison with sequences of other Rickettsiae.</title>
        <authorList>
            <person name="McLeod M.P."/>
            <person name="Qin X."/>
            <person name="Karpathy S.E."/>
            <person name="Gioia J."/>
            <person name="Highlander S.K."/>
            <person name="Fox G.E."/>
            <person name="McNeill T.Z."/>
            <person name="Jiang H."/>
            <person name="Muzny D."/>
            <person name="Jacob L.S."/>
            <person name="Hawes A.C."/>
            <person name="Sodergren E."/>
            <person name="Gill R."/>
            <person name="Hume J."/>
            <person name="Morgan M."/>
            <person name="Fan G."/>
            <person name="Amin A.G."/>
            <person name="Gibbs R.A."/>
            <person name="Hong C."/>
            <person name="Yu X.-J."/>
            <person name="Walker D.H."/>
            <person name="Weinstock G.M."/>
        </authorList>
    </citation>
    <scope>NUCLEOTIDE SEQUENCE [LARGE SCALE GENOMIC DNA]</scope>
    <source>
        <strain>ATCC VR-144 / Wilmington</strain>
    </source>
</reference>
<dbReference type="EC" id="2.4.-.-"/>
<dbReference type="EMBL" id="AE017197">
    <property type="protein sequence ID" value="AAU03809.1"/>
    <property type="molecule type" value="Genomic_DNA"/>
</dbReference>
<dbReference type="RefSeq" id="WP_011190793.1">
    <property type="nucleotide sequence ID" value="NC_006142.1"/>
</dbReference>
<dbReference type="SMR" id="Q68X33"/>
<dbReference type="CAZy" id="GT2">
    <property type="family name" value="Glycosyltransferase Family 2"/>
</dbReference>
<dbReference type="KEGG" id="rty:RT0329"/>
<dbReference type="eggNOG" id="COG1216">
    <property type="taxonomic scope" value="Bacteria"/>
</dbReference>
<dbReference type="HOGENOM" id="CLU_025996_0_0_5"/>
<dbReference type="OrthoDB" id="6383742at2"/>
<dbReference type="Proteomes" id="UP000000604">
    <property type="component" value="Chromosome"/>
</dbReference>
<dbReference type="GO" id="GO:0016758">
    <property type="term" value="F:hexosyltransferase activity"/>
    <property type="evidence" value="ECO:0007669"/>
    <property type="project" value="UniProtKB-ARBA"/>
</dbReference>
<dbReference type="GO" id="GO:0009058">
    <property type="term" value="P:biosynthetic process"/>
    <property type="evidence" value="ECO:0007669"/>
    <property type="project" value="UniProtKB-ARBA"/>
</dbReference>
<dbReference type="Gene3D" id="3.90.550.10">
    <property type="entry name" value="Spore Coat Polysaccharide Biosynthesis Protein SpsA, Chain A"/>
    <property type="match status" value="1"/>
</dbReference>
<dbReference type="InterPro" id="IPR001173">
    <property type="entry name" value="Glyco_trans_2-like"/>
</dbReference>
<dbReference type="InterPro" id="IPR029044">
    <property type="entry name" value="Nucleotide-diphossugar_trans"/>
</dbReference>
<dbReference type="PANTHER" id="PTHR22916">
    <property type="entry name" value="GLYCOSYLTRANSFERASE"/>
    <property type="match status" value="1"/>
</dbReference>
<dbReference type="PANTHER" id="PTHR22916:SF3">
    <property type="entry name" value="UDP-GLCNAC:BETAGAL BETA-1,3-N-ACETYLGLUCOSAMINYLTRANSFERASE-LIKE PROTEIN 1"/>
    <property type="match status" value="1"/>
</dbReference>
<dbReference type="Pfam" id="PF00535">
    <property type="entry name" value="Glycos_transf_2"/>
    <property type="match status" value="1"/>
</dbReference>
<dbReference type="SUPFAM" id="SSF53448">
    <property type="entry name" value="Nucleotide-diphospho-sugar transferases"/>
    <property type="match status" value="1"/>
</dbReference>